<reference key="1">
    <citation type="journal article" date="2009" name="PLoS Genet.">
        <title>Adaptations to submarine hydrothermal environments exemplified by the genome of Nautilia profundicola.</title>
        <authorList>
            <person name="Campbell B.J."/>
            <person name="Smith J.L."/>
            <person name="Hanson T.E."/>
            <person name="Klotz M.G."/>
            <person name="Stein L.Y."/>
            <person name="Lee C.K."/>
            <person name="Wu D."/>
            <person name="Robinson J.M."/>
            <person name="Khouri H.M."/>
            <person name="Eisen J.A."/>
            <person name="Cary S.C."/>
        </authorList>
    </citation>
    <scope>NUCLEOTIDE SEQUENCE [LARGE SCALE GENOMIC DNA]</scope>
    <source>
        <strain>ATCC BAA-1463 / DSM 18972 / AmH</strain>
    </source>
</reference>
<name>ILVD_NAUPA</name>
<feature type="chain" id="PRO_1000190672" description="Dihydroxy-acid dehydratase">
    <location>
        <begin position="1"/>
        <end position="562"/>
    </location>
</feature>
<feature type="active site" description="Proton acceptor" evidence="1">
    <location>
        <position position="476"/>
    </location>
</feature>
<feature type="binding site" evidence="1">
    <location>
        <position position="78"/>
    </location>
    <ligand>
        <name>Mg(2+)</name>
        <dbReference type="ChEBI" id="CHEBI:18420"/>
    </ligand>
</feature>
<feature type="binding site" evidence="1">
    <location>
        <position position="119"/>
    </location>
    <ligand>
        <name>[2Fe-2S] cluster</name>
        <dbReference type="ChEBI" id="CHEBI:190135"/>
    </ligand>
</feature>
<feature type="binding site" evidence="1">
    <location>
        <position position="120"/>
    </location>
    <ligand>
        <name>Mg(2+)</name>
        <dbReference type="ChEBI" id="CHEBI:18420"/>
    </ligand>
</feature>
<feature type="binding site" description="via carbamate group" evidence="1">
    <location>
        <position position="121"/>
    </location>
    <ligand>
        <name>Mg(2+)</name>
        <dbReference type="ChEBI" id="CHEBI:18420"/>
    </ligand>
</feature>
<feature type="binding site" evidence="1">
    <location>
        <position position="192"/>
    </location>
    <ligand>
        <name>[2Fe-2S] cluster</name>
        <dbReference type="ChEBI" id="CHEBI:190135"/>
    </ligand>
</feature>
<feature type="binding site" evidence="1">
    <location>
        <position position="450"/>
    </location>
    <ligand>
        <name>Mg(2+)</name>
        <dbReference type="ChEBI" id="CHEBI:18420"/>
    </ligand>
</feature>
<feature type="modified residue" description="N6-carboxylysine" evidence="1">
    <location>
        <position position="121"/>
    </location>
</feature>
<organism>
    <name type="scientific">Nautilia profundicola (strain ATCC BAA-1463 / DSM 18972 / AmH)</name>
    <dbReference type="NCBI Taxonomy" id="598659"/>
    <lineage>
        <taxon>Bacteria</taxon>
        <taxon>Pseudomonadati</taxon>
        <taxon>Campylobacterota</taxon>
        <taxon>Epsilonproteobacteria</taxon>
        <taxon>Nautiliales</taxon>
        <taxon>Nautiliaceae</taxon>
        <taxon>Nautilia</taxon>
    </lineage>
</organism>
<accession>B9L6Y0</accession>
<keyword id="KW-0001">2Fe-2S</keyword>
<keyword id="KW-0028">Amino-acid biosynthesis</keyword>
<keyword id="KW-0100">Branched-chain amino acid biosynthesis</keyword>
<keyword id="KW-0408">Iron</keyword>
<keyword id="KW-0411">Iron-sulfur</keyword>
<keyword id="KW-0456">Lyase</keyword>
<keyword id="KW-0460">Magnesium</keyword>
<keyword id="KW-0479">Metal-binding</keyword>
<proteinExistence type="inferred from homology"/>
<evidence type="ECO:0000255" key="1">
    <source>
        <dbReference type="HAMAP-Rule" id="MF_00012"/>
    </source>
</evidence>
<sequence>MRSDEVKKGWHRAPHRSLFRATGLKDEDFEKPFIGVANSFIEIIPGHFFLNKYAEIVKDEIRKNGCVPFEFNTIGVDDGIAMGHDGMLYSLPSREIIANSIETVMNAHKLDALICIPNCDKITPGMVMGALRVNVPSIFVTGGPMRAGHMPDGTPIDLATVFEGVGKFEKGEIDEETLYNLECLACPGGGSCSGMFTANSMNTLIEAMGIALKGNGTVLALTPEREELLRAAARRICEIAKDEQLTEQYRIKNIINEKAIHNAFVVDMAMGGSSNTVLHMMAIAKEADVDFDLHKLNEIARHTSHIAKISPSLQTVHMEDIHRAGGMSAVMKEISRRSDTILYLDNPVIEGGTVADRIKDAEVKDPEVIHPIENPYSKVGGLAILFGNLAEEGCVIKTAGITGERKFRGKAVCFNSQQEAIEGITSGKIKKGDVVVIRYEGPKGGPGMQEMLAPTSLIMGMGLGSDVALITDGRFSGATRGLSIGHVSPEAAEGGMIGLLKDGDIIEIDVDNFSINVDLTPEEIEKRKKEFTPIKKEVPGKWLKQYRMLVTNASNGAVLRAE</sequence>
<comment type="function">
    <text evidence="1">Functions in the biosynthesis of branched-chain amino acids. Catalyzes the dehydration of (2R,3R)-2,3-dihydroxy-3-methylpentanoate (2,3-dihydroxy-3-methylvalerate) into 2-oxo-3-methylpentanoate (2-oxo-3-methylvalerate) and of (2R)-2,3-dihydroxy-3-methylbutanoate (2,3-dihydroxyisovalerate) into 2-oxo-3-methylbutanoate (2-oxoisovalerate), the penultimate precursor to L-isoleucine and L-valine, respectively.</text>
</comment>
<comment type="catalytic activity">
    <reaction evidence="1">
        <text>(2R)-2,3-dihydroxy-3-methylbutanoate = 3-methyl-2-oxobutanoate + H2O</text>
        <dbReference type="Rhea" id="RHEA:24809"/>
        <dbReference type="ChEBI" id="CHEBI:11851"/>
        <dbReference type="ChEBI" id="CHEBI:15377"/>
        <dbReference type="ChEBI" id="CHEBI:49072"/>
        <dbReference type="EC" id="4.2.1.9"/>
    </reaction>
    <physiologicalReaction direction="left-to-right" evidence="1">
        <dbReference type="Rhea" id="RHEA:24810"/>
    </physiologicalReaction>
</comment>
<comment type="catalytic activity">
    <reaction evidence="1">
        <text>(2R,3R)-2,3-dihydroxy-3-methylpentanoate = (S)-3-methyl-2-oxopentanoate + H2O</text>
        <dbReference type="Rhea" id="RHEA:27694"/>
        <dbReference type="ChEBI" id="CHEBI:15377"/>
        <dbReference type="ChEBI" id="CHEBI:35146"/>
        <dbReference type="ChEBI" id="CHEBI:49258"/>
        <dbReference type="EC" id="4.2.1.9"/>
    </reaction>
    <physiologicalReaction direction="left-to-right" evidence="1">
        <dbReference type="Rhea" id="RHEA:27695"/>
    </physiologicalReaction>
</comment>
<comment type="cofactor">
    <cofactor evidence="1">
        <name>[2Fe-2S] cluster</name>
        <dbReference type="ChEBI" id="CHEBI:190135"/>
    </cofactor>
    <text evidence="1">Binds 1 [2Fe-2S] cluster per subunit. This cluster acts as a Lewis acid cofactor.</text>
</comment>
<comment type="cofactor">
    <cofactor evidence="1">
        <name>Mg(2+)</name>
        <dbReference type="ChEBI" id="CHEBI:18420"/>
    </cofactor>
</comment>
<comment type="pathway">
    <text evidence="1">Amino-acid biosynthesis; L-isoleucine biosynthesis; L-isoleucine from 2-oxobutanoate: step 3/4.</text>
</comment>
<comment type="pathway">
    <text evidence="1">Amino-acid biosynthesis; L-valine biosynthesis; L-valine from pyruvate: step 3/4.</text>
</comment>
<comment type="subunit">
    <text evidence="1">Homodimer.</text>
</comment>
<comment type="similarity">
    <text evidence="1">Belongs to the IlvD/Edd family.</text>
</comment>
<protein>
    <recommendedName>
        <fullName evidence="1">Dihydroxy-acid dehydratase</fullName>
        <shortName evidence="1">DAD</shortName>
        <ecNumber evidence="1">4.2.1.9</ecNumber>
    </recommendedName>
</protein>
<dbReference type="EC" id="4.2.1.9" evidence="1"/>
<dbReference type="EMBL" id="CP001279">
    <property type="protein sequence ID" value="ACM93186.1"/>
    <property type="molecule type" value="Genomic_DNA"/>
</dbReference>
<dbReference type="RefSeq" id="WP_015902238.1">
    <property type="nucleotide sequence ID" value="NC_012115.1"/>
</dbReference>
<dbReference type="SMR" id="B9L6Y0"/>
<dbReference type="STRING" id="598659.NAMH_1743"/>
<dbReference type="KEGG" id="nam:NAMH_1743"/>
<dbReference type="eggNOG" id="COG0129">
    <property type="taxonomic scope" value="Bacteria"/>
</dbReference>
<dbReference type="HOGENOM" id="CLU_014271_4_2_7"/>
<dbReference type="OrthoDB" id="9807077at2"/>
<dbReference type="UniPathway" id="UPA00047">
    <property type="reaction ID" value="UER00057"/>
</dbReference>
<dbReference type="UniPathway" id="UPA00049">
    <property type="reaction ID" value="UER00061"/>
</dbReference>
<dbReference type="Proteomes" id="UP000000448">
    <property type="component" value="Chromosome"/>
</dbReference>
<dbReference type="GO" id="GO:0005829">
    <property type="term" value="C:cytosol"/>
    <property type="evidence" value="ECO:0007669"/>
    <property type="project" value="TreeGrafter"/>
</dbReference>
<dbReference type="GO" id="GO:0051537">
    <property type="term" value="F:2 iron, 2 sulfur cluster binding"/>
    <property type="evidence" value="ECO:0007669"/>
    <property type="project" value="UniProtKB-UniRule"/>
</dbReference>
<dbReference type="GO" id="GO:0004160">
    <property type="term" value="F:dihydroxy-acid dehydratase activity"/>
    <property type="evidence" value="ECO:0007669"/>
    <property type="project" value="UniProtKB-UniRule"/>
</dbReference>
<dbReference type="GO" id="GO:0000287">
    <property type="term" value="F:magnesium ion binding"/>
    <property type="evidence" value="ECO:0007669"/>
    <property type="project" value="UniProtKB-UniRule"/>
</dbReference>
<dbReference type="GO" id="GO:0009097">
    <property type="term" value="P:isoleucine biosynthetic process"/>
    <property type="evidence" value="ECO:0007669"/>
    <property type="project" value="UniProtKB-UniRule"/>
</dbReference>
<dbReference type="GO" id="GO:0009099">
    <property type="term" value="P:L-valine biosynthetic process"/>
    <property type="evidence" value="ECO:0007669"/>
    <property type="project" value="UniProtKB-UniRule"/>
</dbReference>
<dbReference type="FunFam" id="3.50.30.80:FF:000001">
    <property type="entry name" value="Dihydroxy-acid dehydratase"/>
    <property type="match status" value="1"/>
</dbReference>
<dbReference type="Gene3D" id="3.50.30.80">
    <property type="entry name" value="IlvD/EDD C-terminal domain-like"/>
    <property type="match status" value="1"/>
</dbReference>
<dbReference type="HAMAP" id="MF_00012">
    <property type="entry name" value="IlvD"/>
    <property type="match status" value="1"/>
</dbReference>
<dbReference type="InterPro" id="IPR042096">
    <property type="entry name" value="Dihydro-acid_dehy_C"/>
</dbReference>
<dbReference type="InterPro" id="IPR004404">
    <property type="entry name" value="DihydroxyA_deHydtase"/>
</dbReference>
<dbReference type="InterPro" id="IPR020558">
    <property type="entry name" value="DiOHA_6PGluconate_deHydtase_CS"/>
</dbReference>
<dbReference type="InterPro" id="IPR056740">
    <property type="entry name" value="ILV_EDD_C"/>
</dbReference>
<dbReference type="InterPro" id="IPR000581">
    <property type="entry name" value="ILV_EDD_N"/>
</dbReference>
<dbReference type="InterPro" id="IPR037237">
    <property type="entry name" value="IlvD/EDD_N"/>
</dbReference>
<dbReference type="NCBIfam" id="TIGR00110">
    <property type="entry name" value="ilvD"/>
    <property type="match status" value="1"/>
</dbReference>
<dbReference type="NCBIfam" id="NF002068">
    <property type="entry name" value="PRK00911.1"/>
    <property type="match status" value="1"/>
</dbReference>
<dbReference type="PANTHER" id="PTHR43661">
    <property type="entry name" value="D-XYLONATE DEHYDRATASE"/>
    <property type="match status" value="1"/>
</dbReference>
<dbReference type="PANTHER" id="PTHR43661:SF3">
    <property type="entry name" value="D-XYLONATE DEHYDRATASE YAGF-RELATED"/>
    <property type="match status" value="1"/>
</dbReference>
<dbReference type="Pfam" id="PF24877">
    <property type="entry name" value="ILV_EDD_C"/>
    <property type="match status" value="1"/>
</dbReference>
<dbReference type="Pfam" id="PF00920">
    <property type="entry name" value="ILVD_EDD_N"/>
    <property type="match status" value="1"/>
</dbReference>
<dbReference type="SUPFAM" id="SSF143975">
    <property type="entry name" value="IlvD/EDD N-terminal domain-like"/>
    <property type="match status" value="1"/>
</dbReference>
<dbReference type="SUPFAM" id="SSF52016">
    <property type="entry name" value="LeuD/IlvD-like"/>
    <property type="match status" value="1"/>
</dbReference>
<dbReference type="PROSITE" id="PS00886">
    <property type="entry name" value="ILVD_EDD_1"/>
    <property type="match status" value="1"/>
</dbReference>
<dbReference type="PROSITE" id="PS00887">
    <property type="entry name" value="ILVD_EDD_2"/>
    <property type="match status" value="1"/>
</dbReference>
<gene>
    <name evidence="1" type="primary">ilvD</name>
    <name type="ordered locus">NAMH_1743</name>
</gene>